<organism>
    <name type="scientific">Brucella abortus (strain 2308)</name>
    <dbReference type="NCBI Taxonomy" id="359391"/>
    <lineage>
        <taxon>Bacteria</taxon>
        <taxon>Pseudomonadati</taxon>
        <taxon>Pseudomonadota</taxon>
        <taxon>Alphaproteobacteria</taxon>
        <taxon>Hyphomicrobiales</taxon>
        <taxon>Brucellaceae</taxon>
        <taxon>Brucella/Ochrobactrum group</taxon>
        <taxon>Brucella</taxon>
    </lineage>
</organism>
<keyword id="KW-0029">Amino-acid transport</keyword>
<keyword id="KW-1185">Reference proteome</keyword>
<keyword id="KW-0732">Signal</keyword>
<keyword id="KW-0813">Transport</keyword>
<name>LIVB4_BRUA2</name>
<gene>
    <name type="ordered locus">BAB2_0023</name>
</gene>
<proteinExistence type="inferred from homology"/>
<accession>Q2YL86</accession>
<feature type="signal peptide" evidence="1">
    <location>
        <begin position="1"/>
        <end position="26"/>
    </location>
</feature>
<feature type="chain" id="PRO_0000285738" description="Leu/Ile/Val-binding protein homolog 4">
    <location>
        <begin position="27"/>
        <end position="416"/>
    </location>
</feature>
<reference key="1">
    <citation type="journal article" date="2005" name="Infect. Immun.">
        <title>Whole-genome analyses of speciation events in pathogenic Brucellae.</title>
        <authorList>
            <person name="Chain P.S."/>
            <person name="Comerci D.J."/>
            <person name="Tolmasky M.E."/>
            <person name="Larimer F.W."/>
            <person name="Malfatti S.A."/>
            <person name="Vergez L.M."/>
            <person name="Aguero F."/>
            <person name="Land M.L."/>
            <person name="Ugalde R.A."/>
            <person name="Garcia E."/>
        </authorList>
    </citation>
    <scope>NUCLEOTIDE SEQUENCE [LARGE SCALE GENOMIC DNA]</scope>
    <source>
        <strain>2308</strain>
    </source>
</reference>
<evidence type="ECO:0000255" key="1"/>
<evidence type="ECO:0000305" key="2"/>
<comment type="function">
    <text evidence="2">Component of an amino-acid transport system.</text>
</comment>
<comment type="similarity">
    <text evidence="2">Belongs to the leucine-binding protein family.</text>
</comment>
<comment type="sequence caution" evidence="2">
    <conflict type="erroneous initiation">
        <sequence resource="EMBL-CDS" id="CAJ12189"/>
    </conflict>
</comment>
<protein>
    <recommendedName>
        <fullName>Leu/Ile/Val-binding protein homolog 4</fullName>
    </recommendedName>
</protein>
<dbReference type="EMBL" id="AM040265">
    <property type="protein sequence ID" value="CAJ12189.1"/>
    <property type="status" value="ALT_INIT"/>
    <property type="molecule type" value="Genomic_DNA"/>
</dbReference>
<dbReference type="RefSeq" id="WP_002966556.1">
    <property type="nucleotide sequence ID" value="NZ_KN046823.1"/>
</dbReference>
<dbReference type="SMR" id="Q2YL86"/>
<dbReference type="STRING" id="359391.BAB2_0023"/>
<dbReference type="KEGG" id="bmf:BAB2_0023"/>
<dbReference type="PATRIC" id="fig|359391.11.peg.1974"/>
<dbReference type="HOGENOM" id="CLU_027128_3_0_5"/>
<dbReference type="PhylomeDB" id="Q2YL86"/>
<dbReference type="Proteomes" id="UP000002719">
    <property type="component" value="Chromosome II"/>
</dbReference>
<dbReference type="GO" id="GO:0006865">
    <property type="term" value="P:amino acid transport"/>
    <property type="evidence" value="ECO:0007669"/>
    <property type="project" value="UniProtKB-KW"/>
</dbReference>
<dbReference type="CDD" id="cd06329">
    <property type="entry name" value="PBP1_SBP-like"/>
    <property type="match status" value="1"/>
</dbReference>
<dbReference type="Gene3D" id="3.40.50.2300">
    <property type="match status" value="2"/>
</dbReference>
<dbReference type="InterPro" id="IPR051010">
    <property type="entry name" value="BCAA_transport"/>
</dbReference>
<dbReference type="InterPro" id="IPR028081">
    <property type="entry name" value="Leu-bd"/>
</dbReference>
<dbReference type="InterPro" id="IPR000709">
    <property type="entry name" value="Leu_Ile_Val-bd"/>
</dbReference>
<dbReference type="InterPro" id="IPR028082">
    <property type="entry name" value="Peripla_BP_I"/>
</dbReference>
<dbReference type="PANTHER" id="PTHR30483">
    <property type="entry name" value="LEUCINE-SPECIFIC-BINDING PROTEIN"/>
    <property type="match status" value="1"/>
</dbReference>
<dbReference type="PANTHER" id="PTHR30483:SF6">
    <property type="entry name" value="PERIPLASMIC BINDING PROTEIN OF ABC TRANSPORTER FOR NATURAL AMINO ACIDS"/>
    <property type="match status" value="1"/>
</dbReference>
<dbReference type="Pfam" id="PF13458">
    <property type="entry name" value="Peripla_BP_6"/>
    <property type="match status" value="1"/>
</dbReference>
<dbReference type="PRINTS" id="PR00337">
    <property type="entry name" value="LEUILEVALBP"/>
</dbReference>
<dbReference type="SUPFAM" id="SSF53822">
    <property type="entry name" value="Periplasmic binding protein-like I"/>
    <property type="match status" value="1"/>
</dbReference>
<sequence length="416" mass="44322">MSLKVFLQAGVACAALSLAGAAGASAEPLKIALVETLSGPQASTGLLYRAAVLYQLGKINEAGGFNGEKIQILEYDNQGGPVGAADRVKAAIADGAQIIVQGSSSAVAGQITEDVRKYNLRNKGKEVLYLNLGAEALELTGSKCHFYHFRFSPNAAIRFKTVAQGMKDKGILGERAYSINQNYSWGVDVENTVVANAKEIGYEVVDKTLHEVNKIQDFSPYVAKIQAANVDTVFTGNWSNDLLLLMKAASGAGLKAKFATSFLDQPGNIGNAGAIAEGHIVSTPFNPEANGEASMAFAEDYKKVTGHYPSYVEPAAVFGLQLFGEALKNVKPGEGKINTTDIALAIENASVKTPMGDYSMRSDDHQAKFPMVVQEVSKKARIKADGTEYGFLPFKTFTGDESIDPVQESCSMKRPG</sequence>